<comment type="function">
    <text evidence="1">Required for maturation of urease via the functional incorporation of the urease nickel metallocenter.</text>
</comment>
<comment type="subunit">
    <text evidence="1">UreD, UreF and UreG form a complex that acts as a GTP-hydrolysis-dependent molecular chaperone, activating the urease apoprotein by helping to assemble the nickel containing metallocenter of UreC. The UreE protein probably delivers the nickel.</text>
</comment>
<comment type="subcellular location">
    <subcellularLocation>
        <location evidence="1">Cytoplasm</location>
    </subcellularLocation>
</comment>
<comment type="similarity">
    <text evidence="1">Belongs to the UreF family.</text>
</comment>
<comment type="caution">
    <text evidence="2">Neither O157 strain expresses urease due to a truncation of ureD, the last gene of the probable operon. Urease activity is restored in O157 / Sakai upon complementation with wild-type ureD.</text>
</comment>
<comment type="caution">
    <text evidence="2">This region of the chromosome is duplicated in strain O157:H7 / EDL933 but not in O157:H7 / Sakai.</text>
</comment>
<evidence type="ECO:0000255" key="1">
    <source>
        <dbReference type="HAMAP-Rule" id="MF_01385"/>
    </source>
</evidence>
<evidence type="ECO:0000305" key="2"/>
<feature type="chain" id="PRO_0000344122" description="Urease accessory protein UreF">
    <location>
        <begin position="1"/>
        <end position="224"/>
    </location>
</feature>
<reference key="1">
    <citation type="journal article" date="2001" name="Nature">
        <title>Genome sequence of enterohaemorrhagic Escherichia coli O157:H7.</title>
        <authorList>
            <person name="Perna N.T."/>
            <person name="Plunkett G. III"/>
            <person name="Burland V."/>
            <person name="Mau B."/>
            <person name="Glasner J.D."/>
            <person name="Rose D.J."/>
            <person name="Mayhew G.F."/>
            <person name="Evans P.S."/>
            <person name="Gregor J."/>
            <person name="Kirkpatrick H.A."/>
            <person name="Posfai G."/>
            <person name="Hackett J."/>
            <person name="Klink S."/>
            <person name="Boutin A."/>
            <person name="Shao Y."/>
            <person name="Miller L."/>
            <person name="Grotbeck E.J."/>
            <person name="Davis N.W."/>
            <person name="Lim A."/>
            <person name="Dimalanta E.T."/>
            <person name="Potamousis K."/>
            <person name="Apodaca J."/>
            <person name="Anantharaman T.S."/>
            <person name="Lin J."/>
            <person name="Yen G."/>
            <person name="Schwartz D.C."/>
            <person name="Welch R.A."/>
            <person name="Blattner F.R."/>
        </authorList>
    </citation>
    <scope>NUCLEOTIDE SEQUENCE [LARGE SCALE GENOMIC DNA]</scope>
    <source>
        <strain>O157:H7 / EDL933 / ATCC 700927 / EHEC</strain>
    </source>
</reference>
<reference key="2">
    <citation type="journal article" date="2001" name="DNA Res.">
        <title>Complete genome sequence of enterohemorrhagic Escherichia coli O157:H7 and genomic comparison with a laboratory strain K-12.</title>
        <authorList>
            <person name="Hayashi T."/>
            <person name="Makino K."/>
            <person name="Ohnishi M."/>
            <person name="Kurokawa K."/>
            <person name="Ishii K."/>
            <person name="Yokoyama K."/>
            <person name="Han C.-G."/>
            <person name="Ohtsubo E."/>
            <person name="Nakayama K."/>
            <person name="Murata T."/>
            <person name="Tanaka M."/>
            <person name="Tobe T."/>
            <person name="Iida T."/>
            <person name="Takami H."/>
            <person name="Honda T."/>
            <person name="Sasakawa C."/>
            <person name="Ogasawara N."/>
            <person name="Yasunaga T."/>
            <person name="Kuhara S."/>
            <person name="Shiba T."/>
            <person name="Hattori M."/>
            <person name="Shinagawa H."/>
        </authorList>
    </citation>
    <scope>NUCLEOTIDE SEQUENCE [LARGE SCALE GENOMIC DNA]</scope>
    <source>
        <strain>O157:H7 / Sakai / RIMD 0509952 / EHEC</strain>
    </source>
</reference>
<reference key="3">
    <citation type="journal article" date="2004" name="Microbiology">
        <title>Urease activity of enterohaemorrhagic Escherichia coli depends on a specific one-base substitution in ureD.</title>
        <authorList>
            <person name="Nakano M."/>
            <person name="Iida T."/>
            <person name="Honda T."/>
        </authorList>
    </citation>
    <scope>ABSENCE OF UREASE</scope>
    <source>
        <strain>O157:H7 / Sakai / RIMD 0509952 / EHEC</strain>
    </source>
</reference>
<organism>
    <name type="scientific">Escherichia coli O157:H7</name>
    <dbReference type="NCBI Taxonomy" id="83334"/>
    <lineage>
        <taxon>Bacteria</taxon>
        <taxon>Pseudomonadati</taxon>
        <taxon>Pseudomonadota</taxon>
        <taxon>Gammaproteobacteria</taxon>
        <taxon>Enterobacterales</taxon>
        <taxon>Enterobacteriaceae</taxon>
        <taxon>Escherichia</taxon>
    </lineage>
</organism>
<gene>
    <name evidence="1" type="primary">ureF1</name>
    <name type="ordered locus">Z1147</name>
    <name type="ordered locus">ECs1326</name>
</gene>
<gene>
    <name evidence="1" type="primary">ureF2</name>
    <name type="ordered locus">Z1586</name>
</gene>
<sequence length="224" mass="25156">MPTPEKRLRLMQLASNSLPVGGYSWSQGLEWAVEAGWVEDSAAFEHWQQLQMEQSFFAVDLPLLARLYRACEAGDPDSAGRWTAYLLACRETRELRDEERNRGAAFTRLLVDWQPDCPAEWRKLCQQSQLTGMAWLGVRWQISVSDLALSLGYSWIESAVMAGVRLVPYGQLAAQQLIMRLCARYAANMDSALATPDHAIGSATPLASIASARHETQYSRLFRS</sequence>
<dbReference type="EMBL" id="AE005174">
    <property type="protein sequence ID" value="AAG55292.1"/>
    <property type="molecule type" value="Genomic_DNA"/>
</dbReference>
<dbReference type="EMBL" id="AE005174">
    <property type="protein sequence ID" value="AAG55701.1"/>
    <property type="molecule type" value="Genomic_DNA"/>
</dbReference>
<dbReference type="EMBL" id="BA000007">
    <property type="protein sequence ID" value="BAB34749.1"/>
    <property type="molecule type" value="Genomic_DNA"/>
</dbReference>
<dbReference type="PIR" id="A85655">
    <property type="entry name" value="A85655"/>
</dbReference>
<dbReference type="PIR" id="F90794">
    <property type="entry name" value="F90794"/>
</dbReference>
<dbReference type="RefSeq" id="WP_001142971.1">
    <property type="nucleotide sequence ID" value="NZ_VOAI01000029.1"/>
</dbReference>
<dbReference type="SMR" id="Q8X9U5"/>
<dbReference type="STRING" id="155864.Z1147"/>
<dbReference type="KEGG" id="ece:Z1147"/>
<dbReference type="KEGG" id="ece:Z1586"/>
<dbReference type="KEGG" id="ecs:ECs_1326"/>
<dbReference type="PATRIC" id="fig|386585.9.peg.1431"/>
<dbReference type="eggNOG" id="COG0830">
    <property type="taxonomic scope" value="Bacteria"/>
</dbReference>
<dbReference type="HOGENOM" id="CLU_049215_2_1_6"/>
<dbReference type="OMA" id="QFLYTEM"/>
<dbReference type="Proteomes" id="UP000000558">
    <property type="component" value="Chromosome"/>
</dbReference>
<dbReference type="Proteomes" id="UP000002519">
    <property type="component" value="Chromosome"/>
</dbReference>
<dbReference type="GO" id="GO:0005737">
    <property type="term" value="C:cytoplasm"/>
    <property type="evidence" value="ECO:0007669"/>
    <property type="project" value="UniProtKB-SubCell"/>
</dbReference>
<dbReference type="GO" id="GO:0016151">
    <property type="term" value="F:nickel cation binding"/>
    <property type="evidence" value="ECO:0007669"/>
    <property type="project" value="UniProtKB-UniRule"/>
</dbReference>
<dbReference type="Gene3D" id="1.10.4190.10">
    <property type="entry name" value="Urease accessory protein UreF"/>
    <property type="match status" value="1"/>
</dbReference>
<dbReference type="HAMAP" id="MF_01385">
    <property type="entry name" value="UreF"/>
    <property type="match status" value="1"/>
</dbReference>
<dbReference type="InterPro" id="IPR002639">
    <property type="entry name" value="UreF"/>
</dbReference>
<dbReference type="InterPro" id="IPR038277">
    <property type="entry name" value="UreF_sf"/>
</dbReference>
<dbReference type="PANTHER" id="PTHR33620">
    <property type="entry name" value="UREASE ACCESSORY PROTEIN F"/>
    <property type="match status" value="1"/>
</dbReference>
<dbReference type="PANTHER" id="PTHR33620:SF1">
    <property type="entry name" value="UREASE ACCESSORY PROTEIN F"/>
    <property type="match status" value="1"/>
</dbReference>
<dbReference type="Pfam" id="PF01730">
    <property type="entry name" value="UreF"/>
    <property type="match status" value="1"/>
</dbReference>
<dbReference type="PIRSF" id="PIRSF009467">
    <property type="entry name" value="Ureas_acces_UreF"/>
    <property type="match status" value="1"/>
</dbReference>
<keyword id="KW-0143">Chaperone</keyword>
<keyword id="KW-0963">Cytoplasm</keyword>
<keyword id="KW-0996">Nickel insertion</keyword>
<keyword id="KW-1185">Reference proteome</keyword>
<accession>Q8X9U5</accession>
<accession>Q7AFH3</accession>
<proteinExistence type="inferred from homology"/>
<name>UREF_ECO57</name>
<protein>
    <recommendedName>
        <fullName evidence="1">Urease accessory protein UreF</fullName>
    </recommendedName>
</protein>